<name>RS18_LACH4</name>
<dbReference type="EMBL" id="CP000517">
    <property type="protein sequence ID" value="ABX26306.1"/>
    <property type="molecule type" value="Genomic_DNA"/>
</dbReference>
<dbReference type="RefSeq" id="WP_003628008.1">
    <property type="nucleotide sequence ID" value="NC_010080.1"/>
</dbReference>
<dbReference type="SMR" id="A8YW49"/>
<dbReference type="KEGG" id="lhe:lhv_0009"/>
<dbReference type="eggNOG" id="COG0238">
    <property type="taxonomic scope" value="Bacteria"/>
</dbReference>
<dbReference type="HOGENOM" id="CLU_148710_2_2_9"/>
<dbReference type="Proteomes" id="UP000000790">
    <property type="component" value="Chromosome"/>
</dbReference>
<dbReference type="GO" id="GO:0022627">
    <property type="term" value="C:cytosolic small ribosomal subunit"/>
    <property type="evidence" value="ECO:0007669"/>
    <property type="project" value="TreeGrafter"/>
</dbReference>
<dbReference type="GO" id="GO:0070181">
    <property type="term" value="F:small ribosomal subunit rRNA binding"/>
    <property type="evidence" value="ECO:0007669"/>
    <property type="project" value="TreeGrafter"/>
</dbReference>
<dbReference type="GO" id="GO:0003735">
    <property type="term" value="F:structural constituent of ribosome"/>
    <property type="evidence" value="ECO:0007669"/>
    <property type="project" value="InterPro"/>
</dbReference>
<dbReference type="GO" id="GO:0006412">
    <property type="term" value="P:translation"/>
    <property type="evidence" value="ECO:0007669"/>
    <property type="project" value="UniProtKB-UniRule"/>
</dbReference>
<dbReference type="FunFam" id="4.10.640.10:FF:000003">
    <property type="entry name" value="30S ribosomal protein S18"/>
    <property type="match status" value="1"/>
</dbReference>
<dbReference type="Gene3D" id="4.10.640.10">
    <property type="entry name" value="Ribosomal protein S18"/>
    <property type="match status" value="1"/>
</dbReference>
<dbReference type="HAMAP" id="MF_00270">
    <property type="entry name" value="Ribosomal_bS18"/>
    <property type="match status" value="1"/>
</dbReference>
<dbReference type="InterPro" id="IPR001648">
    <property type="entry name" value="Ribosomal_bS18"/>
</dbReference>
<dbReference type="InterPro" id="IPR018275">
    <property type="entry name" value="Ribosomal_bS18_CS"/>
</dbReference>
<dbReference type="InterPro" id="IPR036870">
    <property type="entry name" value="Ribosomal_bS18_sf"/>
</dbReference>
<dbReference type="NCBIfam" id="TIGR00165">
    <property type="entry name" value="S18"/>
    <property type="match status" value="1"/>
</dbReference>
<dbReference type="PANTHER" id="PTHR13479">
    <property type="entry name" value="30S RIBOSOMAL PROTEIN S18"/>
    <property type="match status" value="1"/>
</dbReference>
<dbReference type="PANTHER" id="PTHR13479:SF40">
    <property type="entry name" value="SMALL RIBOSOMAL SUBUNIT PROTEIN BS18M"/>
    <property type="match status" value="1"/>
</dbReference>
<dbReference type="Pfam" id="PF01084">
    <property type="entry name" value="Ribosomal_S18"/>
    <property type="match status" value="1"/>
</dbReference>
<dbReference type="PRINTS" id="PR00974">
    <property type="entry name" value="RIBOSOMALS18"/>
</dbReference>
<dbReference type="SUPFAM" id="SSF46911">
    <property type="entry name" value="Ribosomal protein S18"/>
    <property type="match status" value="1"/>
</dbReference>
<dbReference type="PROSITE" id="PS00057">
    <property type="entry name" value="RIBOSOMAL_S18"/>
    <property type="match status" value="1"/>
</dbReference>
<comment type="function">
    <text evidence="1">Binds as a heterodimer with protein bS6 to the central domain of the 16S rRNA, where it helps stabilize the platform of the 30S subunit.</text>
</comment>
<comment type="subunit">
    <text evidence="1">Part of the 30S ribosomal subunit. Forms a tight heterodimer with protein bS6.</text>
</comment>
<comment type="similarity">
    <text evidence="1">Belongs to the bacterial ribosomal protein bS18 family.</text>
</comment>
<proteinExistence type="inferred from homology"/>
<organism>
    <name type="scientific">Lactobacillus helveticus (strain DPC 4571)</name>
    <dbReference type="NCBI Taxonomy" id="405566"/>
    <lineage>
        <taxon>Bacteria</taxon>
        <taxon>Bacillati</taxon>
        <taxon>Bacillota</taxon>
        <taxon>Bacilli</taxon>
        <taxon>Lactobacillales</taxon>
        <taxon>Lactobacillaceae</taxon>
        <taxon>Lactobacillus</taxon>
    </lineage>
</organism>
<protein>
    <recommendedName>
        <fullName evidence="1">Small ribosomal subunit protein bS18</fullName>
    </recommendedName>
    <alternativeName>
        <fullName evidence="2">30S ribosomal protein S18</fullName>
    </alternativeName>
</protein>
<sequence length="77" mass="8912">MAQQRRGGRRRKVDYIAANHIDYVDYKDVDLLKRFISERGKILPRRVTGTSAKNQRKVANAIKRARIMGLLPFVAED</sequence>
<gene>
    <name evidence="1" type="primary">rpsR</name>
    <name type="ordered locus">lhv_0009</name>
</gene>
<evidence type="ECO:0000255" key="1">
    <source>
        <dbReference type="HAMAP-Rule" id="MF_00270"/>
    </source>
</evidence>
<evidence type="ECO:0000305" key="2"/>
<keyword id="KW-0687">Ribonucleoprotein</keyword>
<keyword id="KW-0689">Ribosomal protein</keyword>
<keyword id="KW-0694">RNA-binding</keyword>
<keyword id="KW-0699">rRNA-binding</keyword>
<accession>A8YW49</accession>
<reference key="1">
    <citation type="journal article" date="2008" name="J. Bacteriol.">
        <title>Genome sequence of Lactobacillus helveticus: an organism distinguished by selective gene loss and IS element expansion.</title>
        <authorList>
            <person name="Callanan M."/>
            <person name="Kaleta P."/>
            <person name="O'Callaghan J."/>
            <person name="O'Sullivan O."/>
            <person name="Jordan K."/>
            <person name="McAuliffe O."/>
            <person name="Sangrador-Vegas A."/>
            <person name="Slattery L."/>
            <person name="Fitzgerald G.F."/>
            <person name="Beresford T."/>
            <person name="Ross R.P."/>
        </authorList>
    </citation>
    <scope>NUCLEOTIDE SEQUENCE [LARGE SCALE GENOMIC DNA]</scope>
    <source>
        <strain>DPC 4571</strain>
    </source>
</reference>
<feature type="chain" id="PRO_1000071899" description="Small ribosomal subunit protein bS18">
    <location>
        <begin position="1"/>
        <end position="77"/>
    </location>
</feature>